<feature type="peptide" id="PRO_0000043874" description="Galanin">
    <location>
        <begin position="1"/>
        <end position="29"/>
    </location>
</feature>
<feature type="modified residue" description="Alanine amide" evidence="1">
    <location>
        <position position="29"/>
    </location>
</feature>
<keyword id="KW-0027">Amidation</keyword>
<keyword id="KW-0903">Direct protein sequencing</keyword>
<keyword id="KW-0372">Hormone</keyword>
<keyword id="KW-0527">Neuropeptide</keyword>
<keyword id="KW-0964">Secreted</keyword>
<protein>
    <recommendedName>
        <fullName>Galanin</fullName>
    </recommendedName>
</protein>
<reference key="1">
    <citation type="journal article" date="1994" name="Peptides">
        <title>Purification and primary structure of galanin from the alligator stomach.</title>
        <authorList>
            <person name="Wang Y."/>
            <person name="Conlon J.M."/>
        </authorList>
    </citation>
    <scope>PROTEIN SEQUENCE</scope>
    <scope>AMIDATION AT ALA-29</scope>
    <source>
        <tissue>Stomach</tissue>
    </source>
</reference>
<sequence>GWTLNSAGYLLGPHAIDNHRSFNEKHGIA</sequence>
<gene>
    <name type="primary">GAL</name>
</gene>
<comment type="function">
    <text>Contracts smooth muscle of the gastrointestinal and genitourinary tract, regulates growth hormone release, modulates insulin release, and may be involved in the control of adrenal secretion.</text>
</comment>
<comment type="subcellular location">
    <subcellularLocation>
        <location>Secreted</location>
    </subcellularLocation>
</comment>
<comment type="similarity">
    <text evidence="2">Belongs to the galanin family.</text>
</comment>
<evidence type="ECO:0000269" key="1">
    <source>
    </source>
</evidence>
<evidence type="ECO:0000305" key="2"/>
<organism>
    <name type="scientific">Alligator mississippiensis</name>
    <name type="common">American alligator</name>
    <dbReference type="NCBI Taxonomy" id="8496"/>
    <lineage>
        <taxon>Eukaryota</taxon>
        <taxon>Metazoa</taxon>
        <taxon>Chordata</taxon>
        <taxon>Craniata</taxon>
        <taxon>Vertebrata</taxon>
        <taxon>Euteleostomi</taxon>
        <taxon>Archelosauria</taxon>
        <taxon>Archosauria</taxon>
        <taxon>Crocodylia</taxon>
        <taxon>Alligatoridae</taxon>
        <taxon>Alligatorinae</taxon>
        <taxon>Alligator</taxon>
    </lineage>
</organism>
<dbReference type="GO" id="GO:0005615">
    <property type="term" value="C:extracellular space"/>
    <property type="evidence" value="ECO:0007669"/>
    <property type="project" value="TreeGrafter"/>
</dbReference>
<dbReference type="GO" id="GO:0030141">
    <property type="term" value="C:secretory granule"/>
    <property type="evidence" value="ECO:0007669"/>
    <property type="project" value="TreeGrafter"/>
</dbReference>
<dbReference type="GO" id="GO:0031763">
    <property type="term" value="F:galanin receptor binding"/>
    <property type="evidence" value="ECO:0007669"/>
    <property type="project" value="TreeGrafter"/>
</dbReference>
<dbReference type="GO" id="GO:0005184">
    <property type="term" value="F:neuropeptide hormone activity"/>
    <property type="evidence" value="ECO:0007669"/>
    <property type="project" value="TreeGrafter"/>
</dbReference>
<dbReference type="GO" id="GO:0007218">
    <property type="term" value="P:neuropeptide signaling pathway"/>
    <property type="evidence" value="ECO:0007669"/>
    <property type="project" value="UniProtKB-KW"/>
</dbReference>
<dbReference type="InterPro" id="IPR008174">
    <property type="entry name" value="Galanin"/>
</dbReference>
<dbReference type="InterPro" id="IPR008175">
    <property type="entry name" value="Galanin_pre"/>
</dbReference>
<dbReference type="PANTHER" id="PTHR16839">
    <property type="entry name" value="GALANIN"/>
    <property type="match status" value="1"/>
</dbReference>
<dbReference type="PANTHER" id="PTHR16839:SF1">
    <property type="entry name" value="GALANIN PEPTIDES"/>
    <property type="match status" value="1"/>
</dbReference>
<dbReference type="Pfam" id="PF01296">
    <property type="entry name" value="Galanin"/>
    <property type="match status" value="1"/>
</dbReference>
<dbReference type="PRINTS" id="PR00273">
    <property type="entry name" value="GALANIN"/>
</dbReference>
<dbReference type="PROSITE" id="PS00861">
    <property type="entry name" value="GALANIN"/>
    <property type="match status" value="1"/>
</dbReference>
<name>GALA_ALLMI</name>
<proteinExistence type="evidence at protein level"/>
<accession>P47215</accession>